<gene>
    <name evidence="1" type="primary">groES</name>
    <name evidence="1" type="synonym">groS</name>
    <name type="ordered locus">SynWH7803_1999</name>
</gene>
<keyword id="KW-0143">Chaperone</keyword>
<keyword id="KW-0963">Cytoplasm</keyword>
<keyword id="KW-1185">Reference proteome</keyword>
<accession>A5GNB0</accession>
<comment type="function">
    <text evidence="1">Together with the chaperonin GroEL, plays an essential role in assisting protein folding. The GroEL-GroES system forms a nano-cage that allows encapsulation of the non-native substrate proteins and provides a physical environment optimized to promote and accelerate protein folding. GroES binds to the apical surface of the GroEL ring, thereby capping the opening of the GroEL channel.</text>
</comment>
<comment type="subunit">
    <text evidence="1">Heptamer of 7 subunits arranged in a ring. Interacts with the chaperonin GroEL.</text>
</comment>
<comment type="subcellular location">
    <subcellularLocation>
        <location evidence="1">Cytoplasm</location>
    </subcellularLocation>
</comment>
<comment type="similarity">
    <text evidence="1">Belongs to the GroES chaperonin family.</text>
</comment>
<protein>
    <recommendedName>
        <fullName evidence="1">Co-chaperonin GroES</fullName>
    </recommendedName>
    <alternativeName>
        <fullName evidence="1">10 kDa chaperonin</fullName>
    </alternativeName>
    <alternativeName>
        <fullName evidence="1">Chaperonin-10</fullName>
        <shortName evidence="1">Cpn10</shortName>
    </alternativeName>
</protein>
<dbReference type="EMBL" id="CT971583">
    <property type="protein sequence ID" value="CAK24425.1"/>
    <property type="molecule type" value="Genomic_DNA"/>
</dbReference>
<dbReference type="SMR" id="A5GNB0"/>
<dbReference type="STRING" id="32051.SynWH7803_1999"/>
<dbReference type="KEGG" id="syx:SynWH7803_1999"/>
<dbReference type="eggNOG" id="COG0234">
    <property type="taxonomic scope" value="Bacteria"/>
</dbReference>
<dbReference type="HOGENOM" id="CLU_132825_2_1_3"/>
<dbReference type="OrthoDB" id="9806791at2"/>
<dbReference type="Proteomes" id="UP000001566">
    <property type="component" value="Chromosome"/>
</dbReference>
<dbReference type="GO" id="GO:0005737">
    <property type="term" value="C:cytoplasm"/>
    <property type="evidence" value="ECO:0007669"/>
    <property type="project" value="UniProtKB-SubCell"/>
</dbReference>
<dbReference type="GO" id="GO:0005524">
    <property type="term" value="F:ATP binding"/>
    <property type="evidence" value="ECO:0007669"/>
    <property type="project" value="InterPro"/>
</dbReference>
<dbReference type="GO" id="GO:0046872">
    <property type="term" value="F:metal ion binding"/>
    <property type="evidence" value="ECO:0007669"/>
    <property type="project" value="TreeGrafter"/>
</dbReference>
<dbReference type="GO" id="GO:0044183">
    <property type="term" value="F:protein folding chaperone"/>
    <property type="evidence" value="ECO:0007669"/>
    <property type="project" value="InterPro"/>
</dbReference>
<dbReference type="GO" id="GO:0051087">
    <property type="term" value="F:protein-folding chaperone binding"/>
    <property type="evidence" value="ECO:0007669"/>
    <property type="project" value="TreeGrafter"/>
</dbReference>
<dbReference type="GO" id="GO:0051082">
    <property type="term" value="F:unfolded protein binding"/>
    <property type="evidence" value="ECO:0007669"/>
    <property type="project" value="TreeGrafter"/>
</dbReference>
<dbReference type="GO" id="GO:0051085">
    <property type="term" value="P:chaperone cofactor-dependent protein refolding"/>
    <property type="evidence" value="ECO:0007669"/>
    <property type="project" value="TreeGrafter"/>
</dbReference>
<dbReference type="CDD" id="cd00320">
    <property type="entry name" value="cpn10"/>
    <property type="match status" value="1"/>
</dbReference>
<dbReference type="FunFam" id="2.30.33.40:FF:000001">
    <property type="entry name" value="10 kDa chaperonin"/>
    <property type="match status" value="1"/>
</dbReference>
<dbReference type="Gene3D" id="2.30.33.40">
    <property type="entry name" value="GroES chaperonin"/>
    <property type="match status" value="1"/>
</dbReference>
<dbReference type="HAMAP" id="MF_00580">
    <property type="entry name" value="CH10"/>
    <property type="match status" value="1"/>
</dbReference>
<dbReference type="InterPro" id="IPR020818">
    <property type="entry name" value="Chaperonin_GroES"/>
</dbReference>
<dbReference type="InterPro" id="IPR037124">
    <property type="entry name" value="Chaperonin_GroES_sf"/>
</dbReference>
<dbReference type="InterPro" id="IPR018369">
    <property type="entry name" value="Chaprnonin_Cpn10_CS"/>
</dbReference>
<dbReference type="InterPro" id="IPR011032">
    <property type="entry name" value="GroES-like_sf"/>
</dbReference>
<dbReference type="NCBIfam" id="NF001530">
    <property type="entry name" value="PRK00364.1-6"/>
    <property type="match status" value="1"/>
</dbReference>
<dbReference type="NCBIfam" id="NF001531">
    <property type="entry name" value="PRK00364.2-2"/>
    <property type="match status" value="1"/>
</dbReference>
<dbReference type="NCBIfam" id="NF001533">
    <property type="entry name" value="PRK00364.2-4"/>
    <property type="match status" value="1"/>
</dbReference>
<dbReference type="NCBIfam" id="NF001534">
    <property type="entry name" value="PRK00364.2-5"/>
    <property type="match status" value="1"/>
</dbReference>
<dbReference type="PANTHER" id="PTHR10772">
    <property type="entry name" value="10 KDA HEAT SHOCK PROTEIN"/>
    <property type="match status" value="1"/>
</dbReference>
<dbReference type="PANTHER" id="PTHR10772:SF58">
    <property type="entry name" value="CO-CHAPERONIN GROES"/>
    <property type="match status" value="1"/>
</dbReference>
<dbReference type="Pfam" id="PF00166">
    <property type="entry name" value="Cpn10"/>
    <property type="match status" value="1"/>
</dbReference>
<dbReference type="PRINTS" id="PR00297">
    <property type="entry name" value="CHAPERONIN10"/>
</dbReference>
<dbReference type="SMART" id="SM00883">
    <property type="entry name" value="Cpn10"/>
    <property type="match status" value="1"/>
</dbReference>
<dbReference type="SUPFAM" id="SSF50129">
    <property type="entry name" value="GroES-like"/>
    <property type="match status" value="1"/>
</dbReference>
<dbReference type="PROSITE" id="PS00681">
    <property type="entry name" value="CHAPERONINS_CPN10"/>
    <property type="match status" value="1"/>
</dbReference>
<reference key="1">
    <citation type="submission" date="2006-05" db="EMBL/GenBank/DDBJ databases">
        <authorList>
            <consortium name="Genoscope"/>
        </authorList>
    </citation>
    <scope>NUCLEOTIDE SEQUENCE [LARGE SCALE GENOMIC DNA]</scope>
    <source>
        <strain>WH7803</strain>
    </source>
</reference>
<name>CH10_SYNPW</name>
<proteinExistence type="inferred from homology"/>
<organism>
    <name type="scientific">Synechococcus sp. (strain WH7803)</name>
    <dbReference type="NCBI Taxonomy" id="32051"/>
    <lineage>
        <taxon>Bacteria</taxon>
        <taxon>Bacillati</taxon>
        <taxon>Cyanobacteriota</taxon>
        <taxon>Cyanophyceae</taxon>
        <taxon>Synechococcales</taxon>
        <taxon>Synechococcaceae</taxon>
        <taxon>Synechococcus</taxon>
    </lineage>
</organism>
<feature type="chain" id="PRO_1000025386" description="Co-chaperonin GroES">
    <location>
        <begin position="1"/>
        <end position="103"/>
    </location>
</feature>
<evidence type="ECO:0000255" key="1">
    <source>
        <dbReference type="HAMAP-Rule" id="MF_00580"/>
    </source>
</evidence>
<sequence>MAAVSLSVSTVKPLGDRVFVKVSESEEKTAGGILLPDTAKEKPQVGEVVQVGPGKANEDGSRQAPEVGVGDKVLYSKYAGTDIKLGSDEYVLLSEKDILAVVN</sequence>